<comment type="function">
    <text evidence="1">Catalyzes the methylthiolation of an aspartic acid residue of ribosomal protein uS12.</text>
</comment>
<comment type="catalytic activity">
    <reaction evidence="1">
        <text>L-aspartate(89)-[ribosomal protein uS12]-hydrogen + (sulfur carrier)-SH + AH2 + 2 S-adenosyl-L-methionine = 3-methylsulfanyl-L-aspartate(89)-[ribosomal protein uS12]-hydrogen + (sulfur carrier)-H + 5'-deoxyadenosine + L-methionine + A + S-adenosyl-L-homocysteine + 2 H(+)</text>
        <dbReference type="Rhea" id="RHEA:37087"/>
        <dbReference type="Rhea" id="RHEA-COMP:10460"/>
        <dbReference type="Rhea" id="RHEA-COMP:10461"/>
        <dbReference type="Rhea" id="RHEA-COMP:14737"/>
        <dbReference type="Rhea" id="RHEA-COMP:14739"/>
        <dbReference type="ChEBI" id="CHEBI:13193"/>
        <dbReference type="ChEBI" id="CHEBI:15378"/>
        <dbReference type="ChEBI" id="CHEBI:17319"/>
        <dbReference type="ChEBI" id="CHEBI:17499"/>
        <dbReference type="ChEBI" id="CHEBI:29917"/>
        <dbReference type="ChEBI" id="CHEBI:29961"/>
        <dbReference type="ChEBI" id="CHEBI:57844"/>
        <dbReference type="ChEBI" id="CHEBI:57856"/>
        <dbReference type="ChEBI" id="CHEBI:59789"/>
        <dbReference type="ChEBI" id="CHEBI:64428"/>
        <dbReference type="ChEBI" id="CHEBI:73599"/>
        <dbReference type="EC" id="2.8.4.4"/>
    </reaction>
</comment>
<comment type="cofactor">
    <cofactor evidence="1">
        <name>[4Fe-4S] cluster</name>
        <dbReference type="ChEBI" id="CHEBI:49883"/>
    </cofactor>
    <text evidence="1">Binds 2 [4Fe-4S] clusters. One cluster is coordinated with 3 cysteines and an exchangeable S-adenosyl-L-methionine.</text>
</comment>
<comment type="subcellular location">
    <subcellularLocation>
        <location evidence="1">Cytoplasm</location>
    </subcellularLocation>
</comment>
<comment type="similarity">
    <text evidence="1">Belongs to the methylthiotransferase family. RimO subfamily.</text>
</comment>
<keyword id="KW-0004">4Fe-4S</keyword>
<keyword id="KW-0963">Cytoplasm</keyword>
<keyword id="KW-0408">Iron</keyword>
<keyword id="KW-0411">Iron-sulfur</keyword>
<keyword id="KW-0479">Metal-binding</keyword>
<keyword id="KW-1185">Reference proteome</keyword>
<keyword id="KW-0949">S-adenosyl-L-methionine</keyword>
<keyword id="KW-0808">Transferase</keyword>
<dbReference type="EC" id="2.8.4.4" evidence="1"/>
<dbReference type="EMBL" id="CP000812">
    <property type="protein sequence ID" value="ABV34597.1"/>
    <property type="molecule type" value="Genomic_DNA"/>
</dbReference>
<dbReference type="RefSeq" id="WP_012004073.1">
    <property type="nucleotide sequence ID" value="NZ_BSDV01000001.1"/>
</dbReference>
<dbReference type="SMR" id="A8F8W3"/>
<dbReference type="STRING" id="416591.Tlet_2043"/>
<dbReference type="KEGG" id="tle:Tlet_2043"/>
<dbReference type="eggNOG" id="COG0621">
    <property type="taxonomic scope" value="Bacteria"/>
</dbReference>
<dbReference type="HOGENOM" id="CLU_018697_0_1_0"/>
<dbReference type="OrthoDB" id="9805215at2"/>
<dbReference type="Proteomes" id="UP000002016">
    <property type="component" value="Chromosome"/>
</dbReference>
<dbReference type="GO" id="GO:0005829">
    <property type="term" value="C:cytosol"/>
    <property type="evidence" value="ECO:0007669"/>
    <property type="project" value="TreeGrafter"/>
</dbReference>
<dbReference type="GO" id="GO:0051539">
    <property type="term" value="F:4 iron, 4 sulfur cluster binding"/>
    <property type="evidence" value="ECO:0007669"/>
    <property type="project" value="UniProtKB-UniRule"/>
</dbReference>
<dbReference type="GO" id="GO:0035599">
    <property type="term" value="F:aspartic acid methylthiotransferase activity"/>
    <property type="evidence" value="ECO:0007669"/>
    <property type="project" value="TreeGrafter"/>
</dbReference>
<dbReference type="GO" id="GO:0046872">
    <property type="term" value="F:metal ion binding"/>
    <property type="evidence" value="ECO:0007669"/>
    <property type="project" value="UniProtKB-KW"/>
</dbReference>
<dbReference type="GO" id="GO:0103039">
    <property type="term" value="F:protein methylthiotransferase activity"/>
    <property type="evidence" value="ECO:0007669"/>
    <property type="project" value="UniProtKB-EC"/>
</dbReference>
<dbReference type="GO" id="GO:0006400">
    <property type="term" value="P:tRNA modification"/>
    <property type="evidence" value="ECO:0007669"/>
    <property type="project" value="InterPro"/>
</dbReference>
<dbReference type="CDD" id="cd01335">
    <property type="entry name" value="Radical_SAM"/>
    <property type="match status" value="1"/>
</dbReference>
<dbReference type="FunFam" id="3.80.30.20:FF:000001">
    <property type="entry name" value="tRNA-2-methylthio-N(6)-dimethylallyladenosine synthase 2"/>
    <property type="match status" value="1"/>
</dbReference>
<dbReference type="Gene3D" id="3.40.50.12160">
    <property type="entry name" value="Methylthiotransferase, N-terminal domain"/>
    <property type="match status" value="1"/>
</dbReference>
<dbReference type="Gene3D" id="2.40.50.140">
    <property type="entry name" value="Nucleic acid-binding proteins"/>
    <property type="match status" value="1"/>
</dbReference>
<dbReference type="Gene3D" id="3.80.30.20">
    <property type="entry name" value="tm_1862 like domain"/>
    <property type="match status" value="1"/>
</dbReference>
<dbReference type="HAMAP" id="MF_01865">
    <property type="entry name" value="MTTase_RimO"/>
    <property type="match status" value="1"/>
</dbReference>
<dbReference type="InterPro" id="IPR006638">
    <property type="entry name" value="Elp3/MiaA/NifB-like_rSAM"/>
</dbReference>
<dbReference type="InterPro" id="IPR005839">
    <property type="entry name" value="Methylthiotransferase"/>
</dbReference>
<dbReference type="InterPro" id="IPR020612">
    <property type="entry name" value="Methylthiotransferase_CS"/>
</dbReference>
<dbReference type="InterPro" id="IPR013848">
    <property type="entry name" value="Methylthiotransferase_N"/>
</dbReference>
<dbReference type="InterPro" id="IPR038135">
    <property type="entry name" value="Methylthiotransferase_N_sf"/>
</dbReference>
<dbReference type="InterPro" id="IPR012340">
    <property type="entry name" value="NA-bd_OB-fold"/>
</dbReference>
<dbReference type="InterPro" id="IPR005840">
    <property type="entry name" value="Ribosomal_uS12_MeSTrfase_RimO"/>
</dbReference>
<dbReference type="InterPro" id="IPR007197">
    <property type="entry name" value="rSAM"/>
</dbReference>
<dbReference type="InterPro" id="IPR023404">
    <property type="entry name" value="rSAM_horseshoe"/>
</dbReference>
<dbReference type="InterPro" id="IPR002792">
    <property type="entry name" value="TRAM_dom"/>
</dbReference>
<dbReference type="NCBIfam" id="TIGR01125">
    <property type="entry name" value="30S ribosomal protein S12 methylthiotransferase RimO"/>
    <property type="match status" value="1"/>
</dbReference>
<dbReference type="NCBIfam" id="TIGR00089">
    <property type="entry name" value="MiaB/RimO family radical SAM methylthiotransferase"/>
    <property type="match status" value="1"/>
</dbReference>
<dbReference type="PANTHER" id="PTHR43837">
    <property type="entry name" value="RIBOSOMAL PROTEIN S12 METHYLTHIOTRANSFERASE RIMO"/>
    <property type="match status" value="1"/>
</dbReference>
<dbReference type="PANTHER" id="PTHR43837:SF1">
    <property type="entry name" value="RIBOSOMAL PROTEIN US12 METHYLTHIOTRANSFERASE RIMO"/>
    <property type="match status" value="1"/>
</dbReference>
<dbReference type="Pfam" id="PF04055">
    <property type="entry name" value="Radical_SAM"/>
    <property type="match status" value="1"/>
</dbReference>
<dbReference type="Pfam" id="PF18693">
    <property type="entry name" value="TRAM_2"/>
    <property type="match status" value="1"/>
</dbReference>
<dbReference type="Pfam" id="PF00919">
    <property type="entry name" value="UPF0004"/>
    <property type="match status" value="1"/>
</dbReference>
<dbReference type="SFLD" id="SFLDG01082">
    <property type="entry name" value="B12-binding_domain_containing"/>
    <property type="match status" value="1"/>
</dbReference>
<dbReference type="SFLD" id="SFLDG01061">
    <property type="entry name" value="methylthiotransferase"/>
    <property type="match status" value="1"/>
</dbReference>
<dbReference type="SFLD" id="SFLDF00274">
    <property type="entry name" value="ribosomal_protein_S12_methylth"/>
    <property type="match status" value="1"/>
</dbReference>
<dbReference type="SMART" id="SM00729">
    <property type="entry name" value="Elp3"/>
    <property type="match status" value="1"/>
</dbReference>
<dbReference type="SUPFAM" id="SSF102114">
    <property type="entry name" value="Radical SAM enzymes"/>
    <property type="match status" value="1"/>
</dbReference>
<dbReference type="PROSITE" id="PS51449">
    <property type="entry name" value="MTTASE_N"/>
    <property type="match status" value="1"/>
</dbReference>
<dbReference type="PROSITE" id="PS01278">
    <property type="entry name" value="MTTASE_RADICAL"/>
    <property type="match status" value="1"/>
</dbReference>
<dbReference type="PROSITE" id="PS51918">
    <property type="entry name" value="RADICAL_SAM"/>
    <property type="match status" value="1"/>
</dbReference>
<feature type="chain" id="PRO_0000375051" description="Ribosomal protein uS12 methylthiotransferase RimO">
    <location>
        <begin position="1"/>
        <end position="430"/>
    </location>
</feature>
<feature type="domain" description="MTTase N-terminal" evidence="1">
    <location>
        <begin position="1"/>
        <end position="116"/>
    </location>
</feature>
<feature type="domain" description="Radical SAM core" evidence="2">
    <location>
        <begin position="132"/>
        <end position="362"/>
    </location>
</feature>
<feature type="domain" description="TRAM" evidence="1">
    <location>
        <begin position="365"/>
        <end position="430"/>
    </location>
</feature>
<feature type="binding site" evidence="1">
    <location>
        <position position="10"/>
    </location>
    <ligand>
        <name>[4Fe-4S] cluster</name>
        <dbReference type="ChEBI" id="CHEBI:49883"/>
        <label>1</label>
    </ligand>
</feature>
<feature type="binding site" evidence="1">
    <location>
        <position position="46"/>
    </location>
    <ligand>
        <name>[4Fe-4S] cluster</name>
        <dbReference type="ChEBI" id="CHEBI:49883"/>
        <label>1</label>
    </ligand>
</feature>
<feature type="binding site" evidence="1">
    <location>
        <position position="79"/>
    </location>
    <ligand>
        <name>[4Fe-4S] cluster</name>
        <dbReference type="ChEBI" id="CHEBI:49883"/>
        <label>1</label>
    </ligand>
</feature>
<feature type="binding site" evidence="1">
    <location>
        <position position="146"/>
    </location>
    <ligand>
        <name>[4Fe-4S] cluster</name>
        <dbReference type="ChEBI" id="CHEBI:49883"/>
        <label>2</label>
        <note>4Fe-4S-S-AdoMet</note>
    </ligand>
</feature>
<feature type="binding site" evidence="1">
    <location>
        <position position="150"/>
    </location>
    <ligand>
        <name>[4Fe-4S] cluster</name>
        <dbReference type="ChEBI" id="CHEBI:49883"/>
        <label>2</label>
        <note>4Fe-4S-S-AdoMet</note>
    </ligand>
</feature>
<feature type="binding site" evidence="1">
    <location>
        <position position="153"/>
    </location>
    <ligand>
        <name>[4Fe-4S] cluster</name>
        <dbReference type="ChEBI" id="CHEBI:49883"/>
        <label>2</label>
        <note>4Fe-4S-S-AdoMet</note>
    </ligand>
</feature>
<organism>
    <name type="scientific">Pseudothermotoga lettingae (strain ATCC BAA-301 / DSM 14385 / NBRC 107922 / TMO)</name>
    <name type="common">Thermotoga lettingae</name>
    <dbReference type="NCBI Taxonomy" id="416591"/>
    <lineage>
        <taxon>Bacteria</taxon>
        <taxon>Thermotogati</taxon>
        <taxon>Thermotogota</taxon>
        <taxon>Thermotogae</taxon>
        <taxon>Thermotogales</taxon>
        <taxon>Thermotogaceae</taxon>
        <taxon>Pseudothermotoga</taxon>
    </lineage>
</organism>
<name>RIMO_PSELT</name>
<gene>
    <name evidence="1" type="primary">rimO</name>
    <name type="ordered locus">Tlet_2043</name>
</gene>
<reference key="1">
    <citation type="submission" date="2007-08" db="EMBL/GenBank/DDBJ databases">
        <title>Complete sequence of Thermotoga lettingae TMO.</title>
        <authorList>
            <consortium name="US DOE Joint Genome Institute"/>
            <person name="Copeland A."/>
            <person name="Lucas S."/>
            <person name="Lapidus A."/>
            <person name="Barry K."/>
            <person name="Glavina del Rio T."/>
            <person name="Dalin E."/>
            <person name="Tice H."/>
            <person name="Pitluck S."/>
            <person name="Foster B."/>
            <person name="Bruce D."/>
            <person name="Schmutz J."/>
            <person name="Larimer F."/>
            <person name="Land M."/>
            <person name="Hauser L."/>
            <person name="Kyrpides N."/>
            <person name="Mikhailova N."/>
            <person name="Nelson K."/>
            <person name="Gogarten J.P."/>
            <person name="Noll K."/>
            <person name="Richardson P."/>
        </authorList>
    </citation>
    <scope>NUCLEOTIDE SEQUENCE [LARGE SCALE GENOMIC DNA]</scope>
    <source>
        <strain>ATCC BAA-301 / DSM 14385 / NBRC 107922 / TMO</strain>
    </source>
</reference>
<accession>A8F8W3</accession>
<proteinExistence type="inferred from homology"/>
<sequence>MKIGIKVLGCPKNEADCDVLEAILKDRGHEIVSDIEEAEAVIIDTCGFIESAKKESIDEIITFANYKKYRPFFLCVKGCLVQRYSKELSKEIPEVDSWLGVLSPHQIAEAIEKATPYLVEKPTVVYEEAPRSCNNSFAYVKIADGCDRSCTFCSIPLFKGRFKSRSIESIYSEVERLVEIGVKEIILVAQDTTAYGVDLYNKAVLDQLLKKLNSIEGNFRIRVMYLHPDHLTDKMIDAICSLDKLLPYFDIPVQHGSDRILKQMGRIKNSEQLLELIAYIRSHNPDAAIRTSVMVGFPGETNDDFQKLLDFLEKAKFDRLGCFIYSDEEGTVSSSMKRKVSERIARERYENLLIFQSQIAYERLKRFVGKNLNVLIEQENELFYVARSHLDAPEVDGEVTVKKTREVDIPGYYTVRITDSDEYDLKGELI</sequence>
<evidence type="ECO:0000255" key="1">
    <source>
        <dbReference type="HAMAP-Rule" id="MF_01865"/>
    </source>
</evidence>
<evidence type="ECO:0000255" key="2">
    <source>
        <dbReference type="PROSITE-ProRule" id="PRU01266"/>
    </source>
</evidence>
<protein>
    <recommendedName>
        <fullName evidence="1">Ribosomal protein uS12 methylthiotransferase RimO</fullName>
        <shortName evidence="1">uS12 MTTase</shortName>
        <shortName evidence="1">uS12 methylthiotransferase</shortName>
        <ecNumber evidence="1">2.8.4.4</ecNumber>
    </recommendedName>
    <alternativeName>
        <fullName evidence="1">Ribosomal protein uS12 (aspartate-C(3))-methylthiotransferase</fullName>
    </alternativeName>
    <alternativeName>
        <fullName evidence="1">Ribosome maturation factor RimO</fullName>
    </alternativeName>
</protein>